<evidence type="ECO:0000250" key="1"/>
<evidence type="ECO:0000305" key="2"/>
<comment type="function">
    <text evidence="1">Functions as an E3 ubiquitin ligase.</text>
</comment>
<comment type="catalytic activity">
    <reaction>
        <text>S-ubiquitinyl-[E2 ubiquitin-conjugating enzyme]-L-cysteine + [acceptor protein]-L-lysine = [E2 ubiquitin-conjugating enzyme]-L-cysteine + N(6)-ubiquitinyl-[acceptor protein]-L-lysine.</text>
        <dbReference type="EC" id="2.3.2.27"/>
    </reaction>
</comment>
<comment type="pathway">
    <text>Protein modification; protein ubiquitination.</text>
</comment>
<comment type="subunit">
    <text>Binds to SD129.</text>
</comment>
<gene>
    <name type="primary">PUB45</name>
    <name type="ordered locus">At1g27910</name>
    <name type="ORF">F13K9.2</name>
</gene>
<organism>
    <name type="scientific">Arabidopsis thaliana</name>
    <name type="common">Mouse-ear cress</name>
    <dbReference type="NCBI Taxonomy" id="3702"/>
    <lineage>
        <taxon>Eukaryota</taxon>
        <taxon>Viridiplantae</taxon>
        <taxon>Streptophyta</taxon>
        <taxon>Embryophyta</taxon>
        <taxon>Tracheophyta</taxon>
        <taxon>Spermatophyta</taxon>
        <taxon>Magnoliopsida</taxon>
        <taxon>eudicotyledons</taxon>
        <taxon>Gunneridae</taxon>
        <taxon>Pentapetalae</taxon>
        <taxon>rosids</taxon>
        <taxon>malvids</taxon>
        <taxon>Brassicales</taxon>
        <taxon>Brassicaceae</taxon>
        <taxon>Camelineae</taxon>
        <taxon>Arabidopsis</taxon>
    </lineage>
</organism>
<dbReference type="EC" id="2.3.2.27"/>
<dbReference type="EMBL" id="AC069471">
    <property type="protein sequence ID" value="AAG51474.1"/>
    <property type="molecule type" value="Genomic_DNA"/>
</dbReference>
<dbReference type="EMBL" id="CP002684">
    <property type="protein sequence ID" value="AEE30890.1"/>
    <property type="molecule type" value="Genomic_DNA"/>
</dbReference>
<dbReference type="EMBL" id="AY094469">
    <property type="protein sequence ID" value="AAM19837.1"/>
    <property type="molecule type" value="mRNA"/>
</dbReference>
<dbReference type="EMBL" id="BT002721">
    <property type="protein sequence ID" value="AAO11637.1"/>
    <property type="molecule type" value="mRNA"/>
</dbReference>
<dbReference type="EMBL" id="AK230080">
    <property type="protein sequence ID" value="BAF01900.1"/>
    <property type="molecule type" value="mRNA"/>
</dbReference>
<dbReference type="PIR" id="D86404">
    <property type="entry name" value="D86404"/>
</dbReference>
<dbReference type="RefSeq" id="NP_174112.1">
    <property type="nucleotide sequence ID" value="NM_102556.5"/>
</dbReference>
<dbReference type="SMR" id="Q9C7G1"/>
<dbReference type="BioGRID" id="24919">
    <property type="interactions" value="1"/>
</dbReference>
<dbReference type="FunCoup" id="Q9C7G1">
    <property type="interactions" value="732"/>
</dbReference>
<dbReference type="STRING" id="3702.Q9C7G1"/>
<dbReference type="iPTMnet" id="Q9C7G1"/>
<dbReference type="PaxDb" id="3702-AT1G27910.1"/>
<dbReference type="ProteomicsDB" id="226073"/>
<dbReference type="EnsemblPlants" id="AT1G27910.1">
    <property type="protein sequence ID" value="AT1G27910.1"/>
    <property type="gene ID" value="AT1G27910"/>
</dbReference>
<dbReference type="GeneID" id="839684"/>
<dbReference type="Gramene" id="AT1G27910.1">
    <property type="protein sequence ID" value="AT1G27910.1"/>
    <property type="gene ID" value="AT1G27910"/>
</dbReference>
<dbReference type="KEGG" id="ath:AT1G27910"/>
<dbReference type="Araport" id="AT1G27910"/>
<dbReference type="TAIR" id="AT1G27910">
    <property type="gene designation" value="PUB45"/>
</dbReference>
<dbReference type="eggNOG" id="KOG0167">
    <property type="taxonomic scope" value="Eukaryota"/>
</dbReference>
<dbReference type="HOGENOM" id="CLU_006348_4_1_1"/>
<dbReference type="InParanoid" id="Q9C7G1"/>
<dbReference type="OMA" id="ACESEYQ"/>
<dbReference type="PhylomeDB" id="Q9C7G1"/>
<dbReference type="UniPathway" id="UPA00143"/>
<dbReference type="PRO" id="PR:Q9C7G1"/>
<dbReference type="Proteomes" id="UP000006548">
    <property type="component" value="Chromosome 1"/>
</dbReference>
<dbReference type="ExpressionAtlas" id="Q9C7G1">
    <property type="expression patterns" value="baseline and differential"/>
</dbReference>
<dbReference type="GO" id="GO:0070696">
    <property type="term" value="F:transmembrane receptor protein serine/threonine kinase binding"/>
    <property type="evidence" value="ECO:0000353"/>
    <property type="project" value="UniProtKB"/>
</dbReference>
<dbReference type="GO" id="GO:0004842">
    <property type="term" value="F:ubiquitin-protein transferase activity"/>
    <property type="evidence" value="ECO:0000314"/>
    <property type="project" value="TAIR"/>
</dbReference>
<dbReference type="GO" id="GO:0016567">
    <property type="term" value="P:protein ubiquitination"/>
    <property type="evidence" value="ECO:0000314"/>
    <property type="project" value="TAIR"/>
</dbReference>
<dbReference type="CDD" id="cd16664">
    <property type="entry name" value="RING-Ubox_PUB"/>
    <property type="match status" value="1"/>
</dbReference>
<dbReference type="FunFam" id="1.25.10.10:FF:000310">
    <property type="entry name" value="RING-type E3 ubiquitin transferase"/>
    <property type="match status" value="1"/>
</dbReference>
<dbReference type="FunFam" id="3.30.40.10:FF:000114">
    <property type="entry name" value="RING-type E3 ubiquitin transferase"/>
    <property type="match status" value="1"/>
</dbReference>
<dbReference type="Gene3D" id="1.25.10.10">
    <property type="entry name" value="Leucine-rich Repeat Variant"/>
    <property type="match status" value="1"/>
</dbReference>
<dbReference type="Gene3D" id="3.30.40.10">
    <property type="entry name" value="Zinc/RING finger domain, C3HC4 (zinc finger)"/>
    <property type="match status" value="1"/>
</dbReference>
<dbReference type="InterPro" id="IPR011989">
    <property type="entry name" value="ARM-like"/>
</dbReference>
<dbReference type="InterPro" id="IPR016024">
    <property type="entry name" value="ARM-type_fold"/>
</dbReference>
<dbReference type="InterPro" id="IPR000225">
    <property type="entry name" value="Armadillo"/>
</dbReference>
<dbReference type="InterPro" id="IPR045210">
    <property type="entry name" value="RING-Ubox_PUB"/>
</dbReference>
<dbReference type="InterPro" id="IPR003613">
    <property type="entry name" value="Ubox_domain"/>
</dbReference>
<dbReference type="InterPro" id="IPR013083">
    <property type="entry name" value="Znf_RING/FYVE/PHD"/>
</dbReference>
<dbReference type="PANTHER" id="PTHR23315">
    <property type="entry name" value="U BOX DOMAIN-CONTAINING"/>
    <property type="match status" value="1"/>
</dbReference>
<dbReference type="PANTHER" id="PTHR23315:SF306">
    <property type="entry name" value="U-BOX DOMAIN-CONTAINING PROTEIN 45"/>
    <property type="match status" value="1"/>
</dbReference>
<dbReference type="Pfam" id="PF04564">
    <property type="entry name" value="U-box"/>
    <property type="match status" value="1"/>
</dbReference>
<dbReference type="SMART" id="SM00185">
    <property type="entry name" value="ARM"/>
    <property type="match status" value="3"/>
</dbReference>
<dbReference type="SMART" id="SM00504">
    <property type="entry name" value="Ubox"/>
    <property type="match status" value="1"/>
</dbReference>
<dbReference type="SUPFAM" id="SSF48371">
    <property type="entry name" value="ARM repeat"/>
    <property type="match status" value="1"/>
</dbReference>
<dbReference type="SUPFAM" id="SSF57850">
    <property type="entry name" value="RING/U-box"/>
    <property type="match status" value="1"/>
</dbReference>
<dbReference type="PROSITE" id="PS50176">
    <property type="entry name" value="ARM_REPEAT"/>
    <property type="match status" value="1"/>
</dbReference>
<dbReference type="PROSITE" id="PS51698">
    <property type="entry name" value="U_BOX"/>
    <property type="match status" value="1"/>
</dbReference>
<accession>Q9C7G1</accession>
<accession>Q0WLV7</accession>
<feature type="chain" id="PRO_0000322185" description="U-box domain-containing protein 45">
    <location>
        <begin position="1"/>
        <end position="768"/>
    </location>
</feature>
<feature type="domain" description="U-box">
    <location>
        <begin position="278"/>
        <end position="352"/>
    </location>
</feature>
<feature type="repeat" description="ARM 1">
    <location>
        <begin position="454"/>
        <end position="497"/>
    </location>
</feature>
<feature type="repeat" description="ARM 2">
    <location>
        <begin position="500"/>
        <end position="540"/>
    </location>
</feature>
<feature type="repeat" description="ARM 3">
    <location>
        <begin position="542"/>
        <end position="579"/>
    </location>
</feature>
<feature type="repeat" description="ARM 4">
    <location>
        <begin position="581"/>
        <end position="620"/>
    </location>
</feature>
<feature type="repeat" description="ARM 5">
    <location>
        <begin position="623"/>
        <end position="662"/>
    </location>
</feature>
<feature type="sequence conflict" description="In Ref. 4; BAF01900." evidence="2" ref="4">
    <original>PESLDLNYW</original>
    <variation>IAVWNSDDS</variation>
    <location>
        <begin position="358"/>
        <end position="366"/>
    </location>
</feature>
<sequence>MDVNEVEENFFAPGDAKLHGKMCNALSVIYCKIMSIFPSLEAARPRSKSGIQALCSLHVVLEKVKNILRHCTESSKLYLAITGDSVVLKFEKAKSSLTDSLRRVEDIVQQSIGSQLLEILMELENTEFSLDPAEKEIGDQIIGLLQQGGNFESSSDNNELEVFHQAATRLGITSSRAALTERRCLKKLIERARMEDDKRKESIVAYLLHLMRKYSKLFRSEIWDDNDSQGSSSLPCSPTIQGSIDDAHGRAFDRQLSKLSSFNFRSCNNNRRSSQMSVPPEELRCPISLQLMYDPVIIASGQTYERICIEKWFSDGHNTCPKTHQQLSHLCLTPNYCVKALISSWCEQNGVQVPDGPPESLDLNYWRLALSVSESTDTRSAKRVGSCKLKDVKVVPLEESGTIKEEACESEYQEDQVTLVERCTELLTTLTDVDTLRKKCRVVEQIRVLLKDDEEARILMGENGCVEALLQFLGSALNENNASAQKVGAMALFNLAVDNNRNKELMLASGIIPLLEEMLCNPHSHGSVTAIYLNLSCLEEAKPVIGSSLAVPFMVNLLWTETEVQCKVDALHSLFHLSTYPPNIPCLLSADLVNALQSLTISDEQRWTEKSLAVLLNLVLNEAGKDEMVSAPSLVSNLCTILDTGEPNEQEQAVSLLLILCNHSEICSEMVLQEGVIPSLVSISVNGTQRGRERAQKLLTLFRELRQRDQTHLTEPQHTEVTSPEDGFSVASAAVTETKPQCKSASRKKMGRAFSFLWKSKSFSVYQC</sequence>
<reference key="1">
    <citation type="journal article" date="2000" name="Nature">
        <title>Sequence and analysis of chromosome 1 of the plant Arabidopsis thaliana.</title>
        <authorList>
            <person name="Theologis A."/>
            <person name="Ecker J.R."/>
            <person name="Palm C.J."/>
            <person name="Federspiel N.A."/>
            <person name="Kaul S."/>
            <person name="White O."/>
            <person name="Alonso J."/>
            <person name="Altafi H."/>
            <person name="Araujo R."/>
            <person name="Bowman C.L."/>
            <person name="Brooks S.Y."/>
            <person name="Buehler E."/>
            <person name="Chan A."/>
            <person name="Chao Q."/>
            <person name="Chen H."/>
            <person name="Cheuk R.F."/>
            <person name="Chin C.W."/>
            <person name="Chung M.K."/>
            <person name="Conn L."/>
            <person name="Conway A.B."/>
            <person name="Conway A.R."/>
            <person name="Creasy T.H."/>
            <person name="Dewar K."/>
            <person name="Dunn P."/>
            <person name="Etgu P."/>
            <person name="Feldblyum T.V."/>
            <person name="Feng J.-D."/>
            <person name="Fong B."/>
            <person name="Fujii C.Y."/>
            <person name="Gill J.E."/>
            <person name="Goldsmith A.D."/>
            <person name="Haas B."/>
            <person name="Hansen N.F."/>
            <person name="Hughes B."/>
            <person name="Huizar L."/>
            <person name="Hunter J.L."/>
            <person name="Jenkins J."/>
            <person name="Johnson-Hopson C."/>
            <person name="Khan S."/>
            <person name="Khaykin E."/>
            <person name="Kim C.J."/>
            <person name="Koo H.L."/>
            <person name="Kremenetskaia I."/>
            <person name="Kurtz D.B."/>
            <person name="Kwan A."/>
            <person name="Lam B."/>
            <person name="Langin-Hooper S."/>
            <person name="Lee A."/>
            <person name="Lee J.M."/>
            <person name="Lenz C.A."/>
            <person name="Li J.H."/>
            <person name="Li Y.-P."/>
            <person name="Lin X."/>
            <person name="Liu S.X."/>
            <person name="Liu Z.A."/>
            <person name="Luros J.S."/>
            <person name="Maiti R."/>
            <person name="Marziali A."/>
            <person name="Militscher J."/>
            <person name="Miranda M."/>
            <person name="Nguyen M."/>
            <person name="Nierman W.C."/>
            <person name="Osborne B.I."/>
            <person name="Pai G."/>
            <person name="Peterson J."/>
            <person name="Pham P.K."/>
            <person name="Rizzo M."/>
            <person name="Rooney T."/>
            <person name="Rowley D."/>
            <person name="Sakano H."/>
            <person name="Salzberg S.L."/>
            <person name="Schwartz J.R."/>
            <person name="Shinn P."/>
            <person name="Southwick A.M."/>
            <person name="Sun H."/>
            <person name="Tallon L.J."/>
            <person name="Tambunga G."/>
            <person name="Toriumi M.J."/>
            <person name="Town C.D."/>
            <person name="Utterback T."/>
            <person name="Van Aken S."/>
            <person name="Vaysberg M."/>
            <person name="Vysotskaia V.S."/>
            <person name="Walker M."/>
            <person name="Wu D."/>
            <person name="Yu G."/>
            <person name="Fraser C.M."/>
            <person name="Venter J.C."/>
            <person name="Davis R.W."/>
        </authorList>
    </citation>
    <scope>NUCLEOTIDE SEQUENCE [LARGE SCALE GENOMIC DNA]</scope>
    <source>
        <strain>cv. Columbia</strain>
    </source>
</reference>
<reference key="2">
    <citation type="journal article" date="2017" name="Plant J.">
        <title>Araport11: a complete reannotation of the Arabidopsis thaliana reference genome.</title>
        <authorList>
            <person name="Cheng C.Y."/>
            <person name="Krishnakumar V."/>
            <person name="Chan A.P."/>
            <person name="Thibaud-Nissen F."/>
            <person name="Schobel S."/>
            <person name="Town C.D."/>
        </authorList>
    </citation>
    <scope>GENOME REANNOTATION</scope>
    <source>
        <strain>cv. Columbia</strain>
    </source>
</reference>
<reference key="3">
    <citation type="journal article" date="2003" name="Science">
        <title>Empirical analysis of transcriptional activity in the Arabidopsis genome.</title>
        <authorList>
            <person name="Yamada K."/>
            <person name="Lim J."/>
            <person name="Dale J.M."/>
            <person name="Chen H."/>
            <person name="Shinn P."/>
            <person name="Palm C.J."/>
            <person name="Southwick A.M."/>
            <person name="Wu H.C."/>
            <person name="Kim C.J."/>
            <person name="Nguyen M."/>
            <person name="Pham P.K."/>
            <person name="Cheuk R.F."/>
            <person name="Karlin-Newmann G."/>
            <person name="Liu S.X."/>
            <person name="Lam B."/>
            <person name="Sakano H."/>
            <person name="Wu T."/>
            <person name="Yu G."/>
            <person name="Miranda M."/>
            <person name="Quach H.L."/>
            <person name="Tripp M."/>
            <person name="Chang C.H."/>
            <person name="Lee J.M."/>
            <person name="Toriumi M.J."/>
            <person name="Chan M.M."/>
            <person name="Tang C.C."/>
            <person name="Onodera C.S."/>
            <person name="Deng J.M."/>
            <person name="Akiyama K."/>
            <person name="Ansari Y."/>
            <person name="Arakawa T."/>
            <person name="Banh J."/>
            <person name="Banno F."/>
            <person name="Bowser L."/>
            <person name="Brooks S.Y."/>
            <person name="Carninci P."/>
            <person name="Chao Q."/>
            <person name="Choy N."/>
            <person name="Enju A."/>
            <person name="Goldsmith A.D."/>
            <person name="Gurjal M."/>
            <person name="Hansen N.F."/>
            <person name="Hayashizaki Y."/>
            <person name="Johnson-Hopson C."/>
            <person name="Hsuan V.W."/>
            <person name="Iida K."/>
            <person name="Karnes M."/>
            <person name="Khan S."/>
            <person name="Koesema E."/>
            <person name="Ishida J."/>
            <person name="Jiang P.X."/>
            <person name="Jones T."/>
            <person name="Kawai J."/>
            <person name="Kamiya A."/>
            <person name="Meyers C."/>
            <person name="Nakajima M."/>
            <person name="Narusaka M."/>
            <person name="Seki M."/>
            <person name="Sakurai T."/>
            <person name="Satou M."/>
            <person name="Tamse R."/>
            <person name="Vaysberg M."/>
            <person name="Wallender E.K."/>
            <person name="Wong C."/>
            <person name="Yamamura Y."/>
            <person name="Yuan S."/>
            <person name="Shinozaki K."/>
            <person name="Davis R.W."/>
            <person name="Theologis A."/>
            <person name="Ecker J.R."/>
        </authorList>
    </citation>
    <scope>NUCLEOTIDE SEQUENCE [LARGE SCALE MRNA]</scope>
    <source>
        <strain>cv. Columbia</strain>
    </source>
</reference>
<reference key="4">
    <citation type="submission" date="2006-07" db="EMBL/GenBank/DDBJ databases">
        <title>Large-scale analysis of RIKEN Arabidopsis full-length (RAFL) cDNAs.</title>
        <authorList>
            <person name="Totoki Y."/>
            <person name="Seki M."/>
            <person name="Ishida J."/>
            <person name="Nakajima M."/>
            <person name="Enju A."/>
            <person name="Kamiya A."/>
            <person name="Narusaka M."/>
            <person name="Shin-i T."/>
            <person name="Nakagawa M."/>
            <person name="Sakamoto N."/>
            <person name="Oishi K."/>
            <person name="Kohara Y."/>
            <person name="Kobayashi M."/>
            <person name="Toyoda A."/>
            <person name="Sakaki Y."/>
            <person name="Sakurai T."/>
            <person name="Iida K."/>
            <person name="Akiyama K."/>
            <person name="Satou M."/>
            <person name="Toyoda T."/>
            <person name="Konagaya A."/>
            <person name="Carninci P."/>
            <person name="Kawai J."/>
            <person name="Hayashizaki Y."/>
            <person name="Shinozaki K."/>
        </authorList>
    </citation>
    <scope>NUCLEOTIDE SEQUENCE [LARGE SCALE MRNA] OF 358-768</scope>
    <source>
        <strain>cv. Columbia</strain>
    </source>
</reference>
<reference key="5">
    <citation type="journal article" date="2004" name="Plant Physiol.">
        <title>A large complement of the predicted Arabidopsis ARM repeat proteins are members of the U-box E3 ubiquitin ligase family.</title>
        <authorList>
            <person name="Mudgil Y."/>
            <person name="Shiu S.-H."/>
            <person name="Stone S.L."/>
            <person name="Salt J.N."/>
            <person name="Goring D.R."/>
        </authorList>
    </citation>
    <scope>GENE FAMILY ORGANIZATION</scope>
</reference>
<reference key="6">
    <citation type="journal article" date="2008" name="Plant Physiol.">
        <title>Interactions between the S-domain receptor kinases and AtPUB-ARM E3 ubiquitin ligases suggest a conserved signaling pathway in Arabidopsis.</title>
        <authorList>
            <person name="Samuel M.A."/>
            <person name="Mudgil Y."/>
            <person name="Salt J.N."/>
            <person name="Delmas F."/>
            <person name="Ramachandran S."/>
            <person name="Chilelli A."/>
            <person name="Goring D.R."/>
        </authorList>
    </citation>
    <scope>INTERACTION WITH SD129</scope>
</reference>
<protein>
    <recommendedName>
        <fullName>U-box domain-containing protein 45</fullName>
        <ecNumber>2.3.2.27</ecNumber>
    </recommendedName>
    <alternativeName>
        <fullName>Plant U-box protein 45</fullName>
    </alternativeName>
    <alternativeName>
        <fullName evidence="2">RING-type E3 ubiquitin transferase PUB45</fullName>
    </alternativeName>
</protein>
<proteinExistence type="evidence at protein level"/>
<name>PUB45_ARATH</name>
<keyword id="KW-1185">Reference proteome</keyword>
<keyword id="KW-0677">Repeat</keyword>
<keyword id="KW-0808">Transferase</keyword>
<keyword id="KW-0833">Ubl conjugation pathway</keyword>